<feature type="chain" id="PRO_0000225209" description="Elongation factor G">
    <location>
        <begin position="1"/>
        <end position="693"/>
    </location>
</feature>
<feature type="domain" description="tr-type G">
    <location>
        <begin position="9"/>
        <end position="283"/>
    </location>
</feature>
<feature type="binding site" evidence="1">
    <location>
        <begin position="18"/>
        <end position="25"/>
    </location>
    <ligand>
        <name>GTP</name>
        <dbReference type="ChEBI" id="CHEBI:37565"/>
    </ligand>
</feature>
<feature type="binding site" evidence="1">
    <location>
        <begin position="82"/>
        <end position="86"/>
    </location>
    <ligand>
        <name>GTP</name>
        <dbReference type="ChEBI" id="CHEBI:37565"/>
    </ligand>
</feature>
<feature type="binding site" evidence="1">
    <location>
        <begin position="136"/>
        <end position="139"/>
    </location>
    <ligand>
        <name>GTP</name>
        <dbReference type="ChEBI" id="CHEBI:37565"/>
    </ligand>
</feature>
<evidence type="ECO:0000255" key="1">
    <source>
        <dbReference type="HAMAP-Rule" id="MF_00054"/>
    </source>
</evidence>
<proteinExistence type="inferred from homology"/>
<name>EFG_DEHMC</name>
<keyword id="KW-0963">Cytoplasm</keyword>
<keyword id="KW-0251">Elongation factor</keyword>
<keyword id="KW-0342">GTP-binding</keyword>
<keyword id="KW-0547">Nucleotide-binding</keyword>
<keyword id="KW-0648">Protein biosynthesis</keyword>
<dbReference type="EMBL" id="AJ965256">
    <property type="protein sequence ID" value="CAI82637.1"/>
    <property type="molecule type" value="Genomic_DNA"/>
</dbReference>
<dbReference type="RefSeq" id="WP_011308994.1">
    <property type="nucleotide sequence ID" value="NC_007356.1"/>
</dbReference>
<dbReference type="SMR" id="Q3ZZM6"/>
<dbReference type="KEGG" id="deh:cbdbA437"/>
<dbReference type="HOGENOM" id="CLU_002794_4_1_0"/>
<dbReference type="Proteomes" id="UP000000433">
    <property type="component" value="Chromosome"/>
</dbReference>
<dbReference type="GO" id="GO:0005737">
    <property type="term" value="C:cytoplasm"/>
    <property type="evidence" value="ECO:0007669"/>
    <property type="project" value="UniProtKB-SubCell"/>
</dbReference>
<dbReference type="GO" id="GO:0005525">
    <property type="term" value="F:GTP binding"/>
    <property type="evidence" value="ECO:0007669"/>
    <property type="project" value="UniProtKB-UniRule"/>
</dbReference>
<dbReference type="GO" id="GO:0003924">
    <property type="term" value="F:GTPase activity"/>
    <property type="evidence" value="ECO:0007669"/>
    <property type="project" value="InterPro"/>
</dbReference>
<dbReference type="GO" id="GO:0003746">
    <property type="term" value="F:translation elongation factor activity"/>
    <property type="evidence" value="ECO:0007669"/>
    <property type="project" value="UniProtKB-UniRule"/>
</dbReference>
<dbReference type="GO" id="GO:0032790">
    <property type="term" value="P:ribosome disassembly"/>
    <property type="evidence" value="ECO:0007669"/>
    <property type="project" value="TreeGrafter"/>
</dbReference>
<dbReference type="CDD" id="cd01886">
    <property type="entry name" value="EF-G"/>
    <property type="match status" value="1"/>
</dbReference>
<dbReference type="CDD" id="cd16262">
    <property type="entry name" value="EFG_III"/>
    <property type="match status" value="1"/>
</dbReference>
<dbReference type="CDD" id="cd01434">
    <property type="entry name" value="EFG_mtEFG1_IV"/>
    <property type="match status" value="1"/>
</dbReference>
<dbReference type="CDD" id="cd03713">
    <property type="entry name" value="EFG_mtEFG_C"/>
    <property type="match status" value="1"/>
</dbReference>
<dbReference type="CDD" id="cd04088">
    <property type="entry name" value="EFG_mtEFG_II"/>
    <property type="match status" value="1"/>
</dbReference>
<dbReference type="FunFam" id="2.40.30.10:FF:000006">
    <property type="entry name" value="Elongation factor G"/>
    <property type="match status" value="1"/>
</dbReference>
<dbReference type="FunFam" id="3.30.230.10:FF:000003">
    <property type="entry name" value="Elongation factor G"/>
    <property type="match status" value="1"/>
</dbReference>
<dbReference type="FunFam" id="3.30.70.240:FF:000001">
    <property type="entry name" value="Elongation factor G"/>
    <property type="match status" value="1"/>
</dbReference>
<dbReference type="FunFam" id="3.30.70.870:FF:000001">
    <property type="entry name" value="Elongation factor G"/>
    <property type="match status" value="1"/>
</dbReference>
<dbReference type="FunFam" id="3.40.50.300:FF:000029">
    <property type="entry name" value="Elongation factor G"/>
    <property type="match status" value="1"/>
</dbReference>
<dbReference type="Gene3D" id="3.30.230.10">
    <property type="match status" value="1"/>
</dbReference>
<dbReference type="Gene3D" id="3.30.70.240">
    <property type="match status" value="1"/>
</dbReference>
<dbReference type="Gene3D" id="3.30.70.870">
    <property type="entry name" value="Elongation Factor G (Translational Gtpase), domain 3"/>
    <property type="match status" value="1"/>
</dbReference>
<dbReference type="Gene3D" id="3.40.50.300">
    <property type="entry name" value="P-loop containing nucleotide triphosphate hydrolases"/>
    <property type="match status" value="1"/>
</dbReference>
<dbReference type="Gene3D" id="2.40.30.10">
    <property type="entry name" value="Translation factors"/>
    <property type="match status" value="1"/>
</dbReference>
<dbReference type="HAMAP" id="MF_00054_B">
    <property type="entry name" value="EF_G_EF_2_B"/>
    <property type="match status" value="1"/>
</dbReference>
<dbReference type="InterPro" id="IPR053905">
    <property type="entry name" value="EF-G-like_DII"/>
</dbReference>
<dbReference type="InterPro" id="IPR041095">
    <property type="entry name" value="EFG_II"/>
</dbReference>
<dbReference type="InterPro" id="IPR009022">
    <property type="entry name" value="EFG_III"/>
</dbReference>
<dbReference type="InterPro" id="IPR035647">
    <property type="entry name" value="EFG_III/V"/>
</dbReference>
<dbReference type="InterPro" id="IPR047872">
    <property type="entry name" value="EFG_IV"/>
</dbReference>
<dbReference type="InterPro" id="IPR035649">
    <property type="entry name" value="EFG_V"/>
</dbReference>
<dbReference type="InterPro" id="IPR000640">
    <property type="entry name" value="EFG_V-like"/>
</dbReference>
<dbReference type="InterPro" id="IPR031157">
    <property type="entry name" value="G_TR_CS"/>
</dbReference>
<dbReference type="InterPro" id="IPR027417">
    <property type="entry name" value="P-loop_NTPase"/>
</dbReference>
<dbReference type="InterPro" id="IPR020568">
    <property type="entry name" value="Ribosomal_Su5_D2-typ_SF"/>
</dbReference>
<dbReference type="InterPro" id="IPR014721">
    <property type="entry name" value="Ribsml_uS5_D2-typ_fold_subgr"/>
</dbReference>
<dbReference type="InterPro" id="IPR005225">
    <property type="entry name" value="Small_GTP-bd"/>
</dbReference>
<dbReference type="InterPro" id="IPR000795">
    <property type="entry name" value="T_Tr_GTP-bd_dom"/>
</dbReference>
<dbReference type="InterPro" id="IPR009000">
    <property type="entry name" value="Transl_B-barrel_sf"/>
</dbReference>
<dbReference type="InterPro" id="IPR004540">
    <property type="entry name" value="Transl_elong_EFG/EF2"/>
</dbReference>
<dbReference type="InterPro" id="IPR005517">
    <property type="entry name" value="Transl_elong_EFG/EF2_IV"/>
</dbReference>
<dbReference type="NCBIfam" id="TIGR00484">
    <property type="entry name" value="EF-G"/>
    <property type="match status" value="1"/>
</dbReference>
<dbReference type="NCBIfam" id="NF009381">
    <property type="entry name" value="PRK12740.1-5"/>
    <property type="match status" value="1"/>
</dbReference>
<dbReference type="NCBIfam" id="TIGR00231">
    <property type="entry name" value="small_GTP"/>
    <property type="match status" value="1"/>
</dbReference>
<dbReference type="PANTHER" id="PTHR43261:SF1">
    <property type="entry name" value="RIBOSOME-RELEASING FACTOR 2, MITOCHONDRIAL"/>
    <property type="match status" value="1"/>
</dbReference>
<dbReference type="PANTHER" id="PTHR43261">
    <property type="entry name" value="TRANSLATION ELONGATION FACTOR G-RELATED"/>
    <property type="match status" value="1"/>
</dbReference>
<dbReference type="Pfam" id="PF22042">
    <property type="entry name" value="EF-G_D2"/>
    <property type="match status" value="1"/>
</dbReference>
<dbReference type="Pfam" id="PF00679">
    <property type="entry name" value="EFG_C"/>
    <property type="match status" value="1"/>
</dbReference>
<dbReference type="Pfam" id="PF14492">
    <property type="entry name" value="EFG_III"/>
    <property type="match status" value="1"/>
</dbReference>
<dbReference type="Pfam" id="PF03764">
    <property type="entry name" value="EFG_IV"/>
    <property type="match status" value="1"/>
</dbReference>
<dbReference type="Pfam" id="PF00009">
    <property type="entry name" value="GTP_EFTU"/>
    <property type="match status" value="1"/>
</dbReference>
<dbReference type="PRINTS" id="PR00315">
    <property type="entry name" value="ELONGATNFCT"/>
</dbReference>
<dbReference type="SMART" id="SM00838">
    <property type="entry name" value="EFG_C"/>
    <property type="match status" value="1"/>
</dbReference>
<dbReference type="SMART" id="SM00889">
    <property type="entry name" value="EFG_IV"/>
    <property type="match status" value="1"/>
</dbReference>
<dbReference type="SUPFAM" id="SSF54980">
    <property type="entry name" value="EF-G C-terminal domain-like"/>
    <property type="match status" value="2"/>
</dbReference>
<dbReference type="SUPFAM" id="SSF52540">
    <property type="entry name" value="P-loop containing nucleoside triphosphate hydrolases"/>
    <property type="match status" value="1"/>
</dbReference>
<dbReference type="SUPFAM" id="SSF54211">
    <property type="entry name" value="Ribosomal protein S5 domain 2-like"/>
    <property type="match status" value="1"/>
</dbReference>
<dbReference type="SUPFAM" id="SSF50447">
    <property type="entry name" value="Translation proteins"/>
    <property type="match status" value="1"/>
</dbReference>
<dbReference type="PROSITE" id="PS00301">
    <property type="entry name" value="G_TR_1"/>
    <property type="match status" value="1"/>
</dbReference>
<dbReference type="PROSITE" id="PS51722">
    <property type="entry name" value="G_TR_2"/>
    <property type="match status" value="1"/>
</dbReference>
<comment type="function">
    <text evidence="1">Catalyzes the GTP-dependent ribosomal translocation step during translation elongation. During this step, the ribosome changes from the pre-translocational (PRE) to the post-translocational (POST) state as the newly formed A-site-bound peptidyl-tRNA and P-site-bound deacylated tRNA move to the P and E sites, respectively. Catalyzes the coordinated movement of the two tRNA molecules, the mRNA and conformational changes in the ribosome.</text>
</comment>
<comment type="subcellular location">
    <subcellularLocation>
        <location evidence="1">Cytoplasm</location>
    </subcellularLocation>
</comment>
<comment type="similarity">
    <text evidence="1">Belongs to the TRAFAC class translation factor GTPase superfamily. Classic translation factor GTPase family. EF-G/EF-2 subfamily.</text>
</comment>
<accession>Q3ZZM6</accession>
<organism>
    <name type="scientific">Dehalococcoides mccartyi (strain CBDB1)</name>
    <dbReference type="NCBI Taxonomy" id="255470"/>
    <lineage>
        <taxon>Bacteria</taxon>
        <taxon>Bacillati</taxon>
        <taxon>Chloroflexota</taxon>
        <taxon>Dehalococcoidia</taxon>
        <taxon>Dehalococcoidales</taxon>
        <taxon>Dehalococcoidaceae</taxon>
        <taxon>Dehalococcoides</taxon>
    </lineage>
</organism>
<sequence>MSDRKYPLERVRNIGIIAHIDAGKTTTTERILYLTKRTHKIGNIDEGTTVMDWMEQEKARGITITSAATSAYWNGHHLNIIDTPGHVDFTAEVERSLRVLDGGVVVFDGVAGVEAQSETVWRQASRYGVPRICFINKMDRTGANYERTLGMIAERLKAKYLPLQIPIGCAETFRGNCDLLDFKCYGMDNSPEEPVETFDLPAAEKERAVKFRNMMIERLAEEDDEVMEAYLAGEELPIEKLKAAIRRVCLANKAIPIFCGTSLRNKGVKRLLDAVCDYLPSPLDIPAMKGTDPKTGESIERHTSDTEPFSALAFKIVSDPFVGRLVYFRIYSGSISAGSGAYNSTRGERERIGRLIRMHANDREEIEYADAGEIVASLGLRNTFTGDTLCDQNAPILLENIKFPEPVINLAIEPKTRSDQDKMTEGLQKLAEEDPTFKVKFDDETGQTVIYGMGELHLDVLVSRLLSEFKVNAGVGKPRVAYREAITAHAKAQGKFVRQSGGRGQYGDVTIEIEPRERGAGYEFVDNVKGGAIPRNFLMAAESGIRDTLETGVYAGYPMVDVKVIATDGSYHDVDSNENAFKMAGSMAIKAAVAKAKPILLEPIMKLEAVTPEEYMGDVIGDLNSRRGQIISVEPSPETTVITGTVPLAESFGYTTDLRSVTKGRATFSMEFESYREMPGELATQVVEAAGKK</sequence>
<gene>
    <name evidence="1" type="primary">fusA</name>
    <name type="ordered locus">cbdbA437</name>
</gene>
<protein>
    <recommendedName>
        <fullName evidence="1">Elongation factor G</fullName>
        <shortName evidence="1">EF-G</shortName>
    </recommendedName>
</protein>
<reference key="1">
    <citation type="journal article" date="2005" name="Nat. Biotechnol.">
        <title>Genome sequence of the chlorinated compound-respiring bacterium Dehalococcoides species strain CBDB1.</title>
        <authorList>
            <person name="Kube M."/>
            <person name="Beck A."/>
            <person name="Zinder S.H."/>
            <person name="Kuhl H."/>
            <person name="Reinhardt R."/>
            <person name="Adrian L."/>
        </authorList>
    </citation>
    <scope>NUCLEOTIDE SEQUENCE [LARGE SCALE GENOMIC DNA]</scope>
    <source>
        <strain>CBDB1</strain>
    </source>
</reference>